<name>TRPD_MYCTU</name>
<sequence>MALSAEGSSGGSRGGSPKAEAASVPSWPQILGRLTDNRDLARGQAAWAMDQIMTGNARPAQIAAFAVAMTMKAPTADEVGELAGVMLSHAHPLPADTVPDDAVDVVGTGGDGVNTVNLSTMAAIVVAAAGVPVVKHGNRAASSLSGGADTLEALGVRIDLGPDLVARSLAEVGIGFCFAPRFHPSYRHAAAVRREIGVPTVFNLLGPLTNPARPRAGLIGCAFADLAEVMAGVFAARRSSVLVVHGDDGLDELTTTTTSTIWRVAAGSVDKLTFDPAGFGFARAQLDQLAGGDAQANAAAVRAVLGGARGPVRDAVVLNAAGAIVAHAGLSSRAEWLPAWEEGLRRASAAIDTGAAEQLLARWVRFGRQI</sequence>
<organism>
    <name type="scientific">Mycobacterium tuberculosis (strain ATCC 25618 / H37Rv)</name>
    <dbReference type="NCBI Taxonomy" id="83332"/>
    <lineage>
        <taxon>Bacteria</taxon>
        <taxon>Bacillati</taxon>
        <taxon>Actinomycetota</taxon>
        <taxon>Actinomycetes</taxon>
        <taxon>Mycobacteriales</taxon>
        <taxon>Mycobacteriaceae</taxon>
        <taxon>Mycobacterium</taxon>
        <taxon>Mycobacterium tuberculosis complex</taxon>
    </lineage>
</organism>
<evidence type="ECO:0000255" key="1">
    <source>
        <dbReference type="HAMAP-Rule" id="MF_00211"/>
    </source>
</evidence>
<evidence type="ECO:0000256" key="2">
    <source>
        <dbReference type="SAM" id="MobiDB-lite"/>
    </source>
</evidence>
<evidence type="ECO:0000269" key="3">
    <source>
    </source>
</evidence>
<evidence type="ECO:0000269" key="4">
    <source>
    </source>
</evidence>
<evidence type="ECO:0000269" key="5">
    <source ref="4"/>
</evidence>
<evidence type="ECO:0000269" key="6">
    <source ref="5"/>
</evidence>
<evidence type="ECO:0007744" key="7">
    <source>
    </source>
</evidence>
<evidence type="ECO:0007829" key="8">
    <source>
        <dbReference type="PDB" id="3QR9"/>
    </source>
</evidence>
<evidence type="ECO:0007829" key="9">
    <source>
        <dbReference type="PDB" id="4GIU"/>
    </source>
</evidence>
<evidence type="ECO:0007829" key="10">
    <source>
        <dbReference type="PDB" id="4IJ1"/>
    </source>
</evidence>
<evidence type="ECO:0007829" key="11">
    <source>
        <dbReference type="PDB" id="4X5D"/>
    </source>
</evidence>
<accession>P9WFX5</accession>
<accession>L0T8W2</accession>
<accession>P66992</accession>
<accession>Q10382</accession>
<reference key="1">
    <citation type="journal article" date="1998" name="Nature">
        <title>Deciphering the biology of Mycobacterium tuberculosis from the complete genome sequence.</title>
        <authorList>
            <person name="Cole S.T."/>
            <person name="Brosch R."/>
            <person name="Parkhill J."/>
            <person name="Garnier T."/>
            <person name="Churcher C.M."/>
            <person name="Harris D.E."/>
            <person name="Gordon S.V."/>
            <person name="Eiglmeier K."/>
            <person name="Gas S."/>
            <person name="Barry C.E. III"/>
            <person name="Tekaia F."/>
            <person name="Badcock K."/>
            <person name="Basham D."/>
            <person name="Brown D."/>
            <person name="Chillingworth T."/>
            <person name="Connor R."/>
            <person name="Davies R.M."/>
            <person name="Devlin K."/>
            <person name="Feltwell T."/>
            <person name="Gentles S."/>
            <person name="Hamlin N."/>
            <person name="Holroyd S."/>
            <person name="Hornsby T."/>
            <person name="Jagels K."/>
            <person name="Krogh A."/>
            <person name="McLean J."/>
            <person name="Moule S."/>
            <person name="Murphy L.D."/>
            <person name="Oliver S."/>
            <person name="Osborne J."/>
            <person name="Quail M.A."/>
            <person name="Rajandream M.A."/>
            <person name="Rogers J."/>
            <person name="Rutter S."/>
            <person name="Seeger K."/>
            <person name="Skelton S."/>
            <person name="Squares S."/>
            <person name="Squares R."/>
            <person name="Sulston J.E."/>
            <person name="Taylor K."/>
            <person name="Whitehead S."/>
            <person name="Barrell B.G."/>
        </authorList>
    </citation>
    <scope>NUCLEOTIDE SEQUENCE [LARGE SCALE GENOMIC DNA]</scope>
    <source>
        <strain>ATCC 25618 / H37Rv</strain>
    </source>
</reference>
<reference key="2">
    <citation type="journal article" date="2011" name="Mol. Cell. Proteomics">
        <title>Proteogenomic analysis of Mycobacterium tuberculosis by high resolution mass spectrometry.</title>
        <authorList>
            <person name="Kelkar D.S."/>
            <person name="Kumar D."/>
            <person name="Kumar P."/>
            <person name="Balakrishnan L."/>
            <person name="Muthusamy B."/>
            <person name="Yadav A.K."/>
            <person name="Shrivastava P."/>
            <person name="Marimuthu A."/>
            <person name="Anand S."/>
            <person name="Sundaram H."/>
            <person name="Kingsbury R."/>
            <person name="Harsha H.C."/>
            <person name="Nair B."/>
            <person name="Prasad T.S."/>
            <person name="Chauhan D.S."/>
            <person name="Katoch K."/>
            <person name="Katoch V.M."/>
            <person name="Kumar P."/>
            <person name="Chaerkady R."/>
            <person name="Ramachandran S."/>
            <person name="Dash D."/>
            <person name="Pandey A."/>
        </authorList>
    </citation>
    <scope>ACETYLATION [LARGE SCALE ANALYSIS] AT ALA-2</scope>
    <scope>CLEAVAGE OF INITIATOR METHIONINE [LARGE SCALE ANALYSIS]</scope>
    <scope>IDENTIFICATION BY MASS SPECTROMETRY [LARGE SCALE ANALYSIS]</scope>
    <source>
        <strain>ATCC 25618 / H37Rv</strain>
    </source>
</reference>
<reference key="3">
    <citation type="journal article" date="2006" name="J. Mol. Biol.">
        <title>The crystal structure of TrpD, a metabolic enzyme essential for lung colonization by Mycobacterium tuberculosis, in complex with its substrate phosphoribosylpyrophosphate.</title>
        <authorList>
            <person name="Lee C.E."/>
            <person name="Goodfellow C."/>
            <person name="Javid-Majd F."/>
            <person name="Baker E.N."/>
            <person name="Shaun Lott J."/>
        </authorList>
    </citation>
    <scope>X-RAY CRYSTALLOGRAPHY (1.90 ANGSTROMS) OF 2-370 IN COMPLEX WITH PHOSPHORIBOSYLPYROPHOSPHATE AND MAGNESIUM IONS</scope>
    <scope>COFACTOR</scope>
    <scope>SUBUNIT</scope>
</reference>
<reference key="4">
    <citation type="submission" date="2011-02" db="PDB data bank">
        <title>Inhibition of Mycobacterium tuberculosis anthranilate phosphoribosyltransferase by blocking of an active site entrance tunnel.</title>
        <authorList>
            <person name="Castell A."/>
            <person name="Short L.F."/>
            <person name="Evans G."/>
            <person name="Bulloch E.M."/>
            <person name="Cookson T."/>
            <person name="Parker E."/>
            <person name="Lee C."/>
            <person name="Baker E.N."/>
            <person name="Lott J.S."/>
        </authorList>
    </citation>
    <scope>X-RAY CRYSTALLOGRAPHY (2.18 ANGSTROMS) OF 2-370 IN COMPLEX WITH PHOSPHORIBOSYLPYROPHOSPHATE AND MAGNESIUM IONS</scope>
    <scope>COFACTOR</scope>
    <scope>SUBUNIT</scope>
</reference>
<reference key="5">
    <citation type="submission" date="2012-08" db="PDB data bank">
        <title>Improved inhibitors against Mycobacterium tuberculosis anthranilate phosphoribosyltransferase.</title>
        <authorList>
            <person name="Evans G.L."/>
            <person name="Gamage S.A."/>
            <person name="Denny W.A."/>
            <person name="Baker E.N."/>
            <person name="Lott J.S."/>
        </authorList>
    </citation>
    <scope>X-RAY CRYSTALLOGRAPHY (1.67 ANGSTROMS) OF 2-370 IN COMPLEX WITH PHOSPHORIBOSYLPYROPHOSPHATE</scope>
    <scope>ANTHRANILATE ANALOGS AND MAGNESIUM IONS</scope>
    <scope>COFACTOR</scope>
    <scope>SUBUNIT</scope>
</reference>
<reference key="6">
    <citation type="journal article" date="2013" name="Biochemistry">
        <title>The substrate capture mechanism of Mycobacterium tuberculosis anthranilate phosphoribosyltransferase provides a dode for inhibition.</title>
        <authorList>
            <person name="Castell A."/>
            <person name="Short F.L."/>
            <person name="Evans G.L."/>
            <person name="Cookson T.V."/>
            <person name="Bulloch E.M."/>
            <person name="Joseph D.D."/>
            <person name="Lee C.E."/>
            <person name="Parker E.J."/>
            <person name="Baker E.N."/>
            <person name="Lott J.S."/>
        </authorList>
    </citation>
    <scope>X-RAY CRYSTALLOGRAPHY (1.73 ANGSTROMS) OF 2-370 IN COMPLEX WITH PHOSPHORIBOSYLPYROPHOSPHATE</scope>
    <scope>ANTHRANILATE ANALOGS AND MAGNESIUM IONS</scope>
    <scope>COFACTOR</scope>
    <scope>SUBUNIT</scope>
</reference>
<proteinExistence type="evidence at protein level"/>
<dbReference type="EC" id="2.4.2.18" evidence="1"/>
<dbReference type="EMBL" id="AL123456">
    <property type="protein sequence ID" value="CCP44969.1"/>
    <property type="molecule type" value="Genomic_DNA"/>
</dbReference>
<dbReference type="PIR" id="A70784">
    <property type="entry name" value="A70784"/>
</dbReference>
<dbReference type="RefSeq" id="NP_216708.1">
    <property type="nucleotide sequence ID" value="NC_000962.3"/>
</dbReference>
<dbReference type="RefSeq" id="WP_003411387.1">
    <property type="nucleotide sequence ID" value="NZ_NVQJ01000008.1"/>
</dbReference>
<dbReference type="PDB" id="1ZVW">
    <property type="method" value="X-ray"/>
    <property type="resolution" value="2.30 A"/>
    <property type="chains" value="A/B=1-370"/>
</dbReference>
<dbReference type="PDB" id="2BPQ">
    <property type="method" value="X-ray"/>
    <property type="resolution" value="1.90 A"/>
    <property type="chains" value="A/B=2-370"/>
</dbReference>
<dbReference type="PDB" id="3QQS">
    <property type="method" value="X-ray"/>
    <property type="resolution" value="1.97 A"/>
    <property type="chains" value="A/B/C/D=2-370"/>
</dbReference>
<dbReference type="PDB" id="3QR9">
    <property type="method" value="X-ray"/>
    <property type="resolution" value="1.87 A"/>
    <property type="chains" value="A/B=2-370"/>
</dbReference>
<dbReference type="PDB" id="3QS8">
    <property type="method" value="X-ray"/>
    <property type="resolution" value="2.00 A"/>
    <property type="chains" value="A/B/C/D=2-370"/>
</dbReference>
<dbReference type="PDB" id="3QSA">
    <property type="method" value="X-ray"/>
    <property type="resolution" value="2.18 A"/>
    <property type="chains" value="A/B=2-370"/>
</dbReference>
<dbReference type="PDB" id="3R6C">
    <property type="method" value="X-ray"/>
    <property type="resolution" value="1.83 A"/>
    <property type="chains" value="A/B=2-370"/>
</dbReference>
<dbReference type="PDB" id="3R88">
    <property type="method" value="X-ray"/>
    <property type="resolution" value="1.73 A"/>
    <property type="chains" value="A/B=2-370"/>
</dbReference>
<dbReference type="PDB" id="3TWP">
    <property type="method" value="X-ray"/>
    <property type="resolution" value="1.83 A"/>
    <property type="chains" value="A/B/C/D=2-370"/>
</dbReference>
<dbReference type="PDB" id="3UU1">
    <property type="method" value="X-ray"/>
    <property type="resolution" value="1.82 A"/>
    <property type="chains" value="A/B/C/D=2-370"/>
</dbReference>
<dbReference type="PDB" id="4GIU">
    <property type="method" value="X-ray"/>
    <property type="resolution" value="1.67 A"/>
    <property type="chains" value="A/B=1-370"/>
</dbReference>
<dbReference type="PDB" id="4GKM">
    <property type="method" value="X-ray"/>
    <property type="resolution" value="1.67 A"/>
    <property type="chains" value="A/B=2-370"/>
</dbReference>
<dbReference type="PDB" id="4IJ1">
    <property type="method" value="X-ray"/>
    <property type="resolution" value="1.79 A"/>
    <property type="chains" value="A/B=2-370"/>
</dbReference>
<dbReference type="PDB" id="4M0R">
    <property type="method" value="X-ray"/>
    <property type="resolution" value="1.96 A"/>
    <property type="chains" value="A/B=2-370"/>
</dbReference>
<dbReference type="PDB" id="4N5V">
    <property type="method" value="X-ray"/>
    <property type="resolution" value="1.90 A"/>
    <property type="chains" value="A/B=1-370"/>
</dbReference>
<dbReference type="PDB" id="4N8Q">
    <property type="method" value="X-ray"/>
    <property type="resolution" value="2.08 A"/>
    <property type="chains" value="A/B=1-370"/>
</dbReference>
<dbReference type="PDB" id="4N93">
    <property type="method" value="X-ray"/>
    <property type="resolution" value="2.03 A"/>
    <property type="chains" value="A/B=1-370"/>
</dbReference>
<dbReference type="PDB" id="4OWM">
    <property type="method" value="X-ray"/>
    <property type="resolution" value="1.99 A"/>
    <property type="chains" value="A/B=1-370"/>
</dbReference>
<dbReference type="PDB" id="4OWN">
    <property type="method" value="X-ray"/>
    <property type="resolution" value="2.11 A"/>
    <property type="chains" value="A/B=1-370"/>
</dbReference>
<dbReference type="PDB" id="4OWO">
    <property type="method" value="X-ray"/>
    <property type="resolution" value="1.99 A"/>
    <property type="chains" value="A/B=1-370"/>
</dbReference>
<dbReference type="PDB" id="4OWQ">
    <property type="method" value="X-ray"/>
    <property type="resolution" value="1.89 A"/>
    <property type="chains" value="A/B=1-370"/>
</dbReference>
<dbReference type="PDB" id="4OWS">
    <property type="method" value="X-ray"/>
    <property type="resolution" value="2.43 A"/>
    <property type="chains" value="A/B=1-370"/>
</dbReference>
<dbReference type="PDB" id="4OWU">
    <property type="method" value="X-ray"/>
    <property type="resolution" value="1.89 A"/>
    <property type="chains" value="A/B=1-370"/>
</dbReference>
<dbReference type="PDB" id="4OWV">
    <property type="method" value="X-ray"/>
    <property type="resolution" value="1.90 A"/>
    <property type="chains" value="A/B=1-370"/>
</dbReference>
<dbReference type="PDB" id="4X58">
    <property type="method" value="X-ray"/>
    <property type="resolution" value="1.75 A"/>
    <property type="chains" value="A/B=1-370"/>
</dbReference>
<dbReference type="PDB" id="4X59">
    <property type="method" value="X-ray"/>
    <property type="resolution" value="1.80 A"/>
    <property type="chains" value="A/B=1-370"/>
</dbReference>
<dbReference type="PDB" id="4X5A">
    <property type="method" value="X-ray"/>
    <property type="resolution" value="1.93 A"/>
    <property type="chains" value="A/B=1-370"/>
</dbReference>
<dbReference type="PDB" id="4X5B">
    <property type="method" value="X-ray"/>
    <property type="resolution" value="2.47 A"/>
    <property type="chains" value="A/B=1-370"/>
</dbReference>
<dbReference type="PDB" id="4X5C">
    <property type="method" value="X-ray"/>
    <property type="resolution" value="2.33 A"/>
    <property type="chains" value="A/B=1-370"/>
</dbReference>
<dbReference type="PDB" id="4X5D">
    <property type="method" value="X-ray"/>
    <property type="resolution" value="2.30 A"/>
    <property type="chains" value="A/B=1-370"/>
</dbReference>
<dbReference type="PDB" id="4X5E">
    <property type="method" value="X-ray"/>
    <property type="resolution" value="1.77 A"/>
    <property type="chains" value="A/B=1-370"/>
</dbReference>
<dbReference type="PDB" id="5BNE">
    <property type="method" value="X-ray"/>
    <property type="resolution" value="2.15 A"/>
    <property type="chains" value="A/B/C/D=2-370"/>
</dbReference>
<dbReference type="PDB" id="5BYT">
    <property type="method" value="X-ray"/>
    <property type="resolution" value="2.00 A"/>
    <property type="chains" value="A/B=2-370"/>
</dbReference>
<dbReference type="PDB" id="5C1R">
    <property type="method" value="X-ray"/>
    <property type="resolution" value="1.80 A"/>
    <property type="chains" value="A/B=2-370"/>
</dbReference>
<dbReference type="PDB" id="5C2L">
    <property type="method" value="X-ray"/>
    <property type="resolution" value="2.01 A"/>
    <property type="chains" value="A/B=2-370"/>
</dbReference>
<dbReference type="PDB" id="5C7S">
    <property type="method" value="X-ray"/>
    <property type="resolution" value="2.10 A"/>
    <property type="chains" value="A/B=2-370"/>
</dbReference>
<dbReference type="PDBsum" id="1ZVW"/>
<dbReference type="PDBsum" id="2BPQ"/>
<dbReference type="PDBsum" id="3QQS"/>
<dbReference type="PDBsum" id="3QR9"/>
<dbReference type="PDBsum" id="3QS8"/>
<dbReference type="PDBsum" id="3QSA"/>
<dbReference type="PDBsum" id="3R6C"/>
<dbReference type="PDBsum" id="3R88"/>
<dbReference type="PDBsum" id="3TWP"/>
<dbReference type="PDBsum" id="3UU1"/>
<dbReference type="PDBsum" id="4GIU"/>
<dbReference type="PDBsum" id="4GKM"/>
<dbReference type="PDBsum" id="4IJ1"/>
<dbReference type="PDBsum" id="4M0R"/>
<dbReference type="PDBsum" id="4N5V"/>
<dbReference type="PDBsum" id="4N8Q"/>
<dbReference type="PDBsum" id="4N93"/>
<dbReference type="PDBsum" id="4OWM"/>
<dbReference type="PDBsum" id="4OWN"/>
<dbReference type="PDBsum" id="4OWO"/>
<dbReference type="PDBsum" id="4OWQ"/>
<dbReference type="PDBsum" id="4OWS"/>
<dbReference type="PDBsum" id="4OWU"/>
<dbReference type="PDBsum" id="4OWV"/>
<dbReference type="PDBsum" id="4X58"/>
<dbReference type="PDBsum" id="4X59"/>
<dbReference type="PDBsum" id="4X5A"/>
<dbReference type="PDBsum" id="4X5B"/>
<dbReference type="PDBsum" id="4X5C"/>
<dbReference type="PDBsum" id="4X5D"/>
<dbReference type="PDBsum" id="4X5E"/>
<dbReference type="PDBsum" id="5BNE"/>
<dbReference type="PDBsum" id="5BYT"/>
<dbReference type="PDBsum" id="5C1R"/>
<dbReference type="PDBsum" id="5C2L"/>
<dbReference type="PDBsum" id="5C7S"/>
<dbReference type="SMR" id="P9WFX5"/>
<dbReference type="FunCoup" id="P9WFX5">
    <property type="interactions" value="313"/>
</dbReference>
<dbReference type="STRING" id="83332.Rv2192c"/>
<dbReference type="iPTMnet" id="P9WFX5"/>
<dbReference type="PaxDb" id="83332-Rv2192c"/>
<dbReference type="DNASU" id="887681"/>
<dbReference type="GeneID" id="45427983"/>
<dbReference type="GeneID" id="887681"/>
<dbReference type="KEGG" id="mtu:Rv2192c"/>
<dbReference type="KEGG" id="mtv:RVBD_2192c"/>
<dbReference type="PATRIC" id="fig|83332.111.peg.2439"/>
<dbReference type="TubercuList" id="Rv2192c"/>
<dbReference type="eggNOG" id="COG0547">
    <property type="taxonomic scope" value="Bacteria"/>
</dbReference>
<dbReference type="InParanoid" id="P9WFX5"/>
<dbReference type="OrthoDB" id="9806430at2"/>
<dbReference type="PhylomeDB" id="P9WFX5"/>
<dbReference type="BRENDA" id="2.4.2.18">
    <property type="organism ID" value="3445"/>
</dbReference>
<dbReference type="UniPathway" id="UPA00035">
    <property type="reaction ID" value="UER00041"/>
</dbReference>
<dbReference type="EvolutionaryTrace" id="P9WFX5"/>
<dbReference type="Proteomes" id="UP000001584">
    <property type="component" value="Chromosome"/>
</dbReference>
<dbReference type="GO" id="GO:0005829">
    <property type="term" value="C:cytosol"/>
    <property type="evidence" value="ECO:0000318"/>
    <property type="project" value="GO_Central"/>
</dbReference>
<dbReference type="GO" id="GO:0005576">
    <property type="term" value="C:extracellular region"/>
    <property type="evidence" value="ECO:0007005"/>
    <property type="project" value="MTBBASE"/>
</dbReference>
<dbReference type="GO" id="GO:0005886">
    <property type="term" value="C:plasma membrane"/>
    <property type="evidence" value="ECO:0007005"/>
    <property type="project" value="MTBBASE"/>
</dbReference>
<dbReference type="GO" id="GO:0004048">
    <property type="term" value="F:anthranilate phosphoribosyltransferase activity"/>
    <property type="evidence" value="ECO:0007669"/>
    <property type="project" value="UniProtKB-UniRule"/>
</dbReference>
<dbReference type="GO" id="GO:0000287">
    <property type="term" value="F:magnesium ion binding"/>
    <property type="evidence" value="ECO:0007669"/>
    <property type="project" value="UniProtKB-UniRule"/>
</dbReference>
<dbReference type="GO" id="GO:0000162">
    <property type="term" value="P:L-tryptophan biosynthetic process"/>
    <property type="evidence" value="ECO:0000318"/>
    <property type="project" value="GO_Central"/>
</dbReference>
<dbReference type="FunFam" id="1.20.970.10:FF:000006">
    <property type="entry name" value="Anthranilate phosphoribosyltransferase"/>
    <property type="match status" value="1"/>
</dbReference>
<dbReference type="FunFam" id="3.40.1030.10:FF:000002">
    <property type="entry name" value="Anthranilate phosphoribosyltransferase"/>
    <property type="match status" value="1"/>
</dbReference>
<dbReference type="Gene3D" id="3.40.1030.10">
    <property type="entry name" value="Nucleoside phosphorylase/phosphoribosyltransferase catalytic domain"/>
    <property type="match status" value="1"/>
</dbReference>
<dbReference type="Gene3D" id="1.20.970.10">
    <property type="entry name" value="Transferase, Pyrimidine Nucleoside Phosphorylase, Chain C"/>
    <property type="match status" value="1"/>
</dbReference>
<dbReference type="HAMAP" id="MF_00211">
    <property type="entry name" value="TrpD"/>
    <property type="match status" value="1"/>
</dbReference>
<dbReference type="InterPro" id="IPR005940">
    <property type="entry name" value="Anthranilate_Pribosyl_Tfrase"/>
</dbReference>
<dbReference type="InterPro" id="IPR000312">
    <property type="entry name" value="Glycosyl_Trfase_fam3"/>
</dbReference>
<dbReference type="InterPro" id="IPR017459">
    <property type="entry name" value="Glycosyl_Trfase_fam3_N_dom"/>
</dbReference>
<dbReference type="InterPro" id="IPR036320">
    <property type="entry name" value="Glycosyl_Trfase_fam3_N_dom_sf"/>
</dbReference>
<dbReference type="InterPro" id="IPR035902">
    <property type="entry name" value="Nuc_phospho_transferase"/>
</dbReference>
<dbReference type="NCBIfam" id="TIGR01245">
    <property type="entry name" value="trpD"/>
    <property type="match status" value="1"/>
</dbReference>
<dbReference type="PANTHER" id="PTHR43285">
    <property type="entry name" value="ANTHRANILATE PHOSPHORIBOSYLTRANSFERASE"/>
    <property type="match status" value="1"/>
</dbReference>
<dbReference type="PANTHER" id="PTHR43285:SF2">
    <property type="entry name" value="ANTHRANILATE PHOSPHORIBOSYLTRANSFERASE"/>
    <property type="match status" value="1"/>
</dbReference>
<dbReference type="Pfam" id="PF02885">
    <property type="entry name" value="Glycos_trans_3N"/>
    <property type="match status" value="1"/>
</dbReference>
<dbReference type="Pfam" id="PF00591">
    <property type="entry name" value="Glycos_transf_3"/>
    <property type="match status" value="1"/>
</dbReference>
<dbReference type="SUPFAM" id="SSF52418">
    <property type="entry name" value="Nucleoside phosphorylase/phosphoribosyltransferase catalytic domain"/>
    <property type="match status" value="1"/>
</dbReference>
<dbReference type="SUPFAM" id="SSF47648">
    <property type="entry name" value="Nucleoside phosphorylase/phosphoribosyltransferase N-terminal domain"/>
    <property type="match status" value="1"/>
</dbReference>
<keyword id="KW-0002">3D-structure</keyword>
<keyword id="KW-0007">Acetylation</keyword>
<keyword id="KW-0028">Amino-acid biosynthesis</keyword>
<keyword id="KW-0057">Aromatic amino acid biosynthesis</keyword>
<keyword id="KW-0328">Glycosyltransferase</keyword>
<keyword id="KW-0460">Magnesium</keyword>
<keyword id="KW-0479">Metal-binding</keyword>
<keyword id="KW-1185">Reference proteome</keyword>
<keyword id="KW-0808">Transferase</keyword>
<keyword id="KW-0822">Tryptophan biosynthesis</keyword>
<protein>
    <recommendedName>
        <fullName evidence="1">Anthranilate phosphoribosyltransferase</fullName>
        <ecNumber evidence="1">2.4.2.18</ecNumber>
    </recommendedName>
</protein>
<comment type="function">
    <text>Catalyzes the transfer of the phosphoribosyl group of 5-phosphorylribose-1-pyrophosphate (PRPP) to anthranilate to yield N-(5'-phosphoribosyl)-anthranilate (PRA).</text>
</comment>
<comment type="catalytic activity">
    <reaction evidence="1">
        <text>N-(5-phospho-beta-D-ribosyl)anthranilate + diphosphate = 5-phospho-alpha-D-ribose 1-diphosphate + anthranilate</text>
        <dbReference type="Rhea" id="RHEA:11768"/>
        <dbReference type="ChEBI" id="CHEBI:16567"/>
        <dbReference type="ChEBI" id="CHEBI:18277"/>
        <dbReference type="ChEBI" id="CHEBI:33019"/>
        <dbReference type="ChEBI" id="CHEBI:58017"/>
        <dbReference type="EC" id="2.4.2.18"/>
    </reaction>
</comment>
<comment type="cofactor">
    <cofactor evidence="1 3 4 5 6">
        <name>Mg(2+)</name>
        <dbReference type="ChEBI" id="CHEBI:18420"/>
    </cofactor>
    <text evidence="1 3 4 5 6">Binds 2 magnesium ions per monomer.</text>
</comment>
<comment type="pathway">
    <text evidence="1">Amino-acid biosynthesis; L-tryptophan biosynthesis; L-tryptophan from chorismate: step 2/5.</text>
</comment>
<comment type="subunit">
    <text evidence="1 3 4 5 6">Homodimer.</text>
</comment>
<comment type="similarity">
    <text evidence="1">Belongs to the anthranilate phosphoribosyltransferase family.</text>
</comment>
<gene>
    <name evidence="1" type="primary">trpD</name>
    <name type="ordered locus">Rv2192c</name>
    <name type="ORF">MTCY190.03c</name>
</gene>
<feature type="initiator methionine" description="Removed" evidence="7">
    <location>
        <position position="1"/>
    </location>
</feature>
<feature type="chain" id="PRO_0000154461" description="Anthranilate phosphoribosyltransferase">
    <location>
        <begin position="2"/>
        <end position="370"/>
    </location>
</feature>
<feature type="region of interest" description="Disordered" evidence="2">
    <location>
        <begin position="1"/>
        <end position="27"/>
    </location>
</feature>
<feature type="binding site" evidence="1 3 4 5 6">
    <location>
        <position position="107"/>
    </location>
    <ligand>
        <name>5-phospho-alpha-D-ribose 1-diphosphate</name>
        <dbReference type="ChEBI" id="CHEBI:58017"/>
    </ligand>
</feature>
<feature type="binding site" evidence="1">
    <location>
        <position position="107"/>
    </location>
    <ligand>
        <name>anthranilate</name>
        <dbReference type="ChEBI" id="CHEBI:16567"/>
        <label>1</label>
    </ligand>
</feature>
<feature type="binding site">
    <location>
        <begin position="110"/>
        <end position="111"/>
    </location>
    <ligand>
        <name>5-phospho-alpha-D-ribose 1-diphosphate</name>
        <dbReference type="ChEBI" id="CHEBI:58017"/>
    </ligand>
</feature>
<feature type="binding site" evidence="1 3 4 5 6">
    <location>
        <position position="115"/>
    </location>
    <ligand>
        <name>5-phospho-alpha-D-ribose 1-diphosphate</name>
        <dbReference type="ChEBI" id="CHEBI:58017"/>
    </ligand>
</feature>
<feature type="binding site">
    <location>
        <begin position="117"/>
        <end position="120"/>
    </location>
    <ligand>
        <name>5-phospho-alpha-D-ribose 1-diphosphate</name>
        <dbReference type="ChEBI" id="CHEBI:58017"/>
    </ligand>
</feature>
<feature type="binding site">
    <location>
        <position position="119"/>
    </location>
    <ligand>
        <name>Mg(2+)</name>
        <dbReference type="ChEBI" id="CHEBI:18420"/>
        <label>1</label>
    </ligand>
</feature>
<feature type="binding site">
    <location>
        <begin position="135"/>
        <end position="143"/>
    </location>
    <ligand>
        <name>5-phospho-alpha-D-ribose 1-diphosphate</name>
        <dbReference type="ChEBI" id="CHEBI:58017"/>
    </ligand>
</feature>
<feature type="binding site">
    <location>
        <position position="138"/>
    </location>
    <ligand>
        <name>anthranilate</name>
        <dbReference type="ChEBI" id="CHEBI:16567"/>
        <label>1</label>
    </ligand>
</feature>
<feature type="binding site" evidence="1 3 4 5 6">
    <location>
        <position position="147"/>
    </location>
    <ligand>
        <name>5-phospho-alpha-D-ribose 1-diphosphate</name>
        <dbReference type="ChEBI" id="CHEBI:58017"/>
    </ligand>
</feature>
<feature type="binding site">
    <location>
        <position position="193"/>
    </location>
    <ligand>
        <name>anthranilate</name>
        <dbReference type="ChEBI" id="CHEBI:16567"/>
        <label>2</label>
    </ligand>
</feature>
<feature type="binding site">
    <location>
        <position position="251"/>
    </location>
    <ligand>
        <name>Mg(2+)</name>
        <dbReference type="ChEBI" id="CHEBI:18420"/>
        <label>2</label>
    </ligand>
</feature>
<feature type="binding site">
    <location>
        <position position="252"/>
    </location>
    <ligand>
        <name>Mg(2+)</name>
        <dbReference type="ChEBI" id="CHEBI:18420"/>
        <label>1</label>
    </ligand>
</feature>
<feature type="binding site">
    <location>
        <position position="252"/>
    </location>
    <ligand>
        <name>Mg(2+)</name>
        <dbReference type="ChEBI" id="CHEBI:18420"/>
        <label>2</label>
    </ligand>
</feature>
<feature type="modified residue" description="N-acetylalanine" evidence="7">
    <location>
        <position position="2"/>
    </location>
</feature>
<feature type="helix" evidence="9">
    <location>
        <begin position="27"/>
        <end position="35"/>
    </location>
</feature>
<feature type="helix" evidence="9">
    <location>
        <begin position="44"/>
        <end position="53"/>
    </location>
</feature>
<feature type="helix" evidence="9">
    <location>
        <begin position="59"/>
        <end position="72"/>
    </location>
</feature>
<feature type="helix" evidence="9">
    <location>
        <begin position="76"/>
        <end position="89"/>
    </location>
</feature>
<feature type="strand" evidence="9">
    <location>
        <begin position="103"/>
        <end position="107"/>
    </location>
</feature>
<feature type="strand" evidence="11">
    <location>
        <begin position="111"/>
        <end position="113"/>
    </location>
</feature>
<feature type="helix" evidence="9">
    <location>
        <begin position="118"/>
        <end position="128"/>
    </location>
</feature>
<feature type="strand" evidence="9">
    <location>
        <begin position="133"/>
        <end position="137"/>
    </location>
</feature>
<feature type="strand" evidence="9">
    <location>
        <begin position="141"/>
        <end position="145"/>
    </location>
</feature>
<feature type="helix" evidence="9">
    <location>
        <begin position="147"/>
        <end position="153"/>
    </location>
</feature>
<feature type="helix" evidence="9">
    <location>
        <begin position="162"/>
        <end position="172"/>
    </location>
</feature>
<feature type="strand" evidence="9">
    <location>
        <begin position="173"/>
        <end position="178"/>
    </location>
</feature>
<feature type="helix" evidence="9">
    <location>
        <begin position="179"/>
        <end position="182"/>
    </location>
</feature>
<feature type="helix" evidence="9">
    <location>
        <begin position="184"/>
        <end position="189"/>
    </location>
</feature>
<feature type="helix" evidence="9">
    <location>
        <begin position="190"/>
        <end position="196"/>
    </location>
</feature>
<feature type="helix" evidence="9">
    <location>
        <begin position="201"/>
        <end position="204"/>
    </location>
</feature>
<feature type="helix" evidence="9">
    <location>
        <begin position="206"/>
        <end position="208"/>
    </location>
</feature>
<feature type="strand" evidence="9">
    <location>
        <begin position="215"/>
        <end position="220"/>
    </location>
</feature>
<feature type="helix" evidence="9">
    <location>
        <begin position="224"/>
        <end position="226"/>
    </location>
</feature>
<feature type="helix" evidence="9">
    <location>
        <begin position="227"/>
        <end position="236"/>
    </location>
</feature>
<feature type="strand" evidence="9">
    <location>
        <begin position="240"/>
        <end position="246"/>
    </location>
</feature>
<feature type="turn" evidence="8">
    <location>
        <begin position="247"/>
        <end position="249"/>
    </location>
</feature>
<feature type="strand" evidence="8">
    <location>
        <begin position="250"/>
        <end position="252"/>
    </location>
</feature>
<feature type="strand" evidence="9">
    <location>
        <begin position="255"/>
        <end position="257"/>
    </location>
</feature>
<feature type="strand" evidence="9">
    <location>
        <begin position="259"/>
        <end position="265"/>
    </location>
</feature>
<feature type="strand" evidence="9">
    <location>
        <begin position="268"/>
        <end position="274"/>
    </location>
</feature>
<feature type="helix" evidence="9">
    <location>
        <begin position="276"/>
        <end position="279"/>
    </location>
</feature>
<feature type="helix" evidence="9">
    <location>
        <begin position="286"/>
        <end position="289"/>
    </location>
</feature>
<feature type="helix" evidence="9">
    <location>
        <begin position="294"/>
        <end position="305"/>
    </location>
</feature>
<feature type="helix" evidence="9">
    <location>
        <begin position="311"/>
        <end position="328"/>
    </location>
</feature>
<feature type="turn" evidence="10">
    <location>
        <begin position="329"/>
        <end position="331"/>
    </location>
</feature>
<feature type="helix" evidence="9">
    <location>
        <begin position="336"/>
        <end position="352"/>
    </location>
</feature>
<feature type="helix" evidence="9">
    <location>
        <begin position="355"/>
        <end position="368"/>
    </location>
</feature>